<accession>Q4UL68</accession>
<organism>
    <name type="scientific">Rickettsia felis (strain ATCC VR-1525 / URRWXCal2)</name>
    <name type="common">Rickettsia azadi</name>
    <dbReference type="NCBI Taxonomy" id="315456"/>
    <lineage>
        <taxon>Bacteria</taxon>
        <taxon>Pseudomonadati</taxon>
        <taxon>Pseudomonadota</taxon>
        <taxon>Alphaproteobacteria</taxon>
        <taxon>Rickettsiales</taxon>
        <taxon>Rickettsiaceae</taxon>
        <taxon>Rickettsieae</taxon>
        <taxon>Rickettsia</taxon>
        <taxon>spotted fever group</taxon>
    </lineage>
</organism>
<gene>
    <name evidence="1" type="primary">nuoN</name>
    <name type="ordered locus">RF_0854</name>
</gene>
<comment type="function">
    <text evidence="1">NDH-1 shuttles electrons from NADH, via FMN and iron-sulfur (Fe-S) centers, to quinones in the respiratory chain. The immediate electron acceptor for the enzyme in this species is believed to be ubiquinone. Couples the redox reaction to proton translocation (for every two electrons transferred, four hydrogen ions are translocated across the cytoplasmic membrane), and thus conserves the redox energy in a proton gradient.</text>
</comment>
<comment type="catalytic activity">
    <reaction evidence="1">
        <text>a quinone + NADH + 5 H(+)(in) = a quinol + NAD(+) + 4 H(+)(out)</text>
        <dbReference type="Rhea" id="RHEA:57888"/>
        <dbReference type="ChEBI" id="CHEBI:15378"/>
        <dbReference type="ChEBI" id="CHEBI:24646"/>
        <dbReference type="ChEBI" id="CHEBI:57540"/>
        <dbReference type="ChEBI" id="CHEBI:57945"/>
        <dbReference type="ChEBI" id="CHEBI:132124"/>
    </reaction>
</comment>
<comment type="subunit">
    <text evidence="1">NDH-1 is composed of 14 different subunits. Subunits NuoA, H, J, K, L, M, N constitute the membrane sector of the complex.</text>
</comment>
<comment type="subcellular location">
    <subcellularLocation>
        <location evidence="1">Cell inner membrane</location>
        <topology evidence="1">Multi-pass membrane protein</topology>
    </subcellularLocation>
</comment>
<comment type="similarity">
    <text evidence="1">Belongs to the complex I subunit 2 family.</text>
</comment>
<protein>
    <recommendedName>
        <fullName evidence="1">NADH-quinone oxidoreductase subunit N</fullName>
        <ecNumber evidence="1">7.1.1.-</ecNumber>
    </recommendedName>
    <alternativeName>
        <fullName evidence="1">NADH dehydrogenase I subunit N</fullName>
    </alternativeName>
    <alternativeName>
        <fullName evidence="1">NDH-1 subunit N</fullName>
    </alternativeName>
</protein>
<dbReference type="EC" id="7.1.1.-" evidence="1"/>
<dbReference type="EMBL" id="CP000053">
    <property type="protein sequence ID" value="AAY61705.1"/>
    <property type="molecule type" value="Genomic_DNA"/>
</dbReference>
<dbReference type="SMR" id="Q4UL68"/>
<dbReference type="STRING" id="315456.RF_0854"/>
<dbReference type="KEGG" id="rfe:RF_0854"/>
<dbReference type="eggNOG" id="COG1007">
    <property type="taxonomic scope" value="Bacteria"/>
</dbReference>
<dbReference type="HOGENOM" id="CLU_007100_1_3_5"/>
<dbReference type="OrthoDB" id="9811718at2"/>
<dbReference type="Proteomes" id="UP000008548">
    <property type="component" value="Chromosome"/>
</dbReference>
<dbReference type="GO" id="GO:0005886">
    <property type="term" value="C:plasma membrane"/>
    <property type="evidence" value="ECO:0007669"/>
    <property type="project" value="UniProtKB-SubCell"/>
</dbReference>
<dbReference type="GO" id="GO:0008137">
    <property type="term" value="F:NADH dehydrogenase (ubiquinone) activity"/>
    <property type="evidence" value="ECO:0007669"/>
    <property type="project" value="InterPro"/>
</dbReference>
<dbReference type="GO" id="GO:0050136">
    <property type="term" value="F:NADH:ubiquinone reductase (non-electrogenic) activity"/>
    <property type="evidence" value="ECO:0007669"/>
    <property type="project" value="UniProtKB-UniRule"/>
</dbReference>
<dbReference type="GO" id="GO:0048038">
    <property type="term" value="F:quinone binding"/>
    <property type="evidence" value="ECO:0007669"/>
    <property type="project" value="UniProtKB-KW"/>
</dbReference>
<dbReference type="GO" id="GO:0042773">
    <property type="term" value="P:ATP synthesis coupled electron transport"/>
    <property type="evidence" value="ECO:0007669"/>
    <property type="project" value="InterPro"/>
</dbReference>
<dbReference type="HAMAP" id="MF_00445">
    <property type="entry name" value="NDH1_NuoN_1"/>
    <property type="match status" value="1"/>
</dbReference>
<dbReference type="InterPro" id="IPR010096">
    <property type="entry name" value="NADH-Q_OxRdtase_suN/2"/>
</dbReference>
<dbReference type="InterPro" id="IPR001750">
    <property type="entry name" value="ND/Mrp_TM"/>
</dbReference>
<dbReference type="NCBIfam" id="TIGR01770">
    <property type="entry name" value="NDH_I_N"/>
    <property type="match status" value="1"/>
</dbReference>
<dbReference type="NCBIfam" id="NF004447">
    <property type="entry name" value="PRK05777.2-5"/>
    <property type="match status" value="1"/>
</dbReference>
<dbReference type="PANTHER" id="PTHR22773">
    <property type="entry name" value="NADH DEHYDROGENASE"/>
    <property type="match status" value="1"/>
</dbReference>
<dbReference type="Pfam" id="PF00361">
    <property type="entry name" value="Proton_antipo_M"/>
    <property type="match status" value="1"/>
</dbReference>
<name>NUON_RICFE</name>
<keyword id="KW-0997">Cell inner membrane</keyword>
<keyword id="KW-1003">Cell membrane</keyword>
<keyword id="KW-0472">Membrane</keyword>
<keyword id="KW-0520">NAD</keyword>
<keyword id="KW-0874">Quinone</keyword>
<keyword id="KW-1278">Translocase</keyword>
<keyword id="KW-0812">Transmembrane</keyword>
<keyword id="KW-1133">Transmembrane helix</keyword>
<keyword id="KW-0813">Transport</keyword>
<keyword id="KW-0830">Ubiquinone</keyword>
<feature type="chain" id="PRO_0000272332" description="NADH-quinone oxidoreductase subunit N">
    <location>
        <begin position="1"/>
        <end position="458"/>
    </location>
</feature>
<feature type="transmembrane region" description="Helical" evidence="1">
    <location>
        <begin position="4"/>
        <end position="24"/>
    </location>
</feature>
<feature type="transmembrane region" description="Helical" evidence="1">
    <location>
        <begin position="30"/>
        <end position="50"/>
    </location>
</feature>
<feature type="transmembrane region" description="Helical" evidence="1">
    <location>
        <begin position="62"/>
        <end position="82"/>
    </location>
</feature>
<feature type="transmembrane region" description="Helical" evidence="1">
    <location>
        <begin position="94"/>
        <end position="114"/>
    </location>
</feature>
<feature type="transmembrane region" description="Helical" evidence="1">
    <location>
        <begin position="118"/>
        <end position="138"/>
    </location>
</feature>
<feature type="transmembrane region" description="Helical" evidence="1">
    <location>
        <begin position="153"/>
        <end position="173"/>
    </location>
</feature>
<feature type="transmembrane region" description="Helical" evidence="1">
    <location>
        <begin position="194"/>
        <end position="214"/>
    </location>
</feature>
<feature type="transmembrane region" description="Helical" evidence="1">
    <location>
        <begin position="235"/>
        <end position="255"/>
    </location>
</feature>
<feature type="transmembrane region" description="Helical" evidence="1">
    <location>
        <begin position="261"/>
        <end position="281"/>
    </location>
</feature>
<feature type="transmembrane region" description="Helical" evidence="1">
    <location>
        <begin position="290"/>
        <end position="310"/>
    </location>
</feature>
<feature type="transmembrane region" description="Helical" evidence="1">
    <location>
        <begin position="318"/>
        <end position="338"/>
    </location>
</feature>
<feature type="transmembrane region" description="Helical" evidence="1">
    <location>
        <begin position="361"/>
        <end position="381"/>
    </location>
</feature>
<feature type="transmembrane region" description="Helical" evidence="1">
    <location>
        <begin position="397"/>
        <end position="417"/>
    </location>
</feature>
<feature type="transmembrane region" description="Helical" evidence="1">
    <location>
        <begin position="438"/>
        <end position="458"/>
    </location>
</feature>
<sequence>MLLLLPEITLTLIALLGQFFAVIIPNKNRIISNIIILLCILSIFLTFKYSSYEGVWYSFATGINIGISKSIVLLFTIISMIIYRDYSILIAEELKFEFITLILLSVVGIFVAISSRNFLLLFCGMELTALTSYALAGFKLNDIKSSEGALKYFILGSLVSCLSLFGISFIYGFGGSLQFEDILYKLNNNSGMNLGLIIGIVLFLSSIFFKLSSVPLHFWVPDVYEGSPISSVTYFTAASKIGMVIVLLNISKLIIGNYYPINYNLIKIIAILSMLFGAFGAIRQTSLKRLMAYSTILNIGYVLIGVLLHNQEGYKAALLYILIYAVGSIGFFTCLIMLLGKDADKASFKTIQGIAENHKTIAAIISIVMFSMIGIPPLTGFFGKYYLFYQAINQEEFILAYCGIFTSVVAAFYYLKVVKAMYFSKKIEIIKLPMLYGLLLINYLVVGFLLLGSFIISF</sequence>
<evidence type="ECO:0000255" key="1">
    <source>
        <dbReference type="HAMAP-Rule" id="MF_00445"/>
    </source>
</evidence>
<proteinExistence type="inferred from homology"/>
<reference key="1">
    <citation type="journal article" date="2005" name="PLoS Biol.">
        <title>The genome sequence of Rickettsia felis identifies the first putative conjugative plasmid in an obligate intracellular parasite.</title>
        <authorList>
            <person name="Ogata H."/>
            <person name="Renesto P."/>
            <person name="Audic S."/>
            <person name="Robert C."/>
            <person name="Blanc G."/>
            <person name="Fournier P.-E."/>
            <person name="Parinello H."/>
            <person name="Claverie J.-M."/>
            <person name="Raoult D."/>
        </authorList>
    </citation>
    <scope>NUCLEOTIDE SEQUENCE [LARGE SCALE GENOMIC DNA]</scope>
    <source>
        <strain>ATCC VR-1525 / URRWXCal2</strain>
    </source>
</reference>